<feature type="chain" id="PRO_0000099866" description="Putrescine oxidase">
    <location>
        <begin position="1"/>
        <end position="478"/>
    </location>
</feature>
<feature type="binding site" evidence="1">
    <location>
        <begin position="15"/>
        <end position="70"/>
    </location>
    <ligand>
        <name>FAD</name>
        <dbReference type="ChEBI" id="CHEBI:57692"/>
    </ligand>
</feature>
<sequence>MTDQRTLGSETAIERDVVVVGAGPAGLMAARTLVAAGRTVAVLEARDRVGGRTWSKTVDGAFLEIGGQWISPDQTELLALVDELGLETYQRYREGESVYLAPDGTRHTYTGSMFPAGESTIVEMEKLVALLDGLVAEIGATEPWAHPAARELDTISFHHWLRQHSDDEAACSNIGIFVAGGMLTKPAHAFSVLQAVLMAASAGSFSNLVDEDFILDRRVVGGMQSVSETMAAELGEDVVFLDTPVRTIRWAGDGGTYAEHVPGTPVTVWSDRLTVRAKDVVVAVPPNLYSRISFEPPLPRLQHQMHQHQSLGLVIKVHAVYETPFWRDKGLSGTGFGAHELSQEVYDNTNHGDPRGTLVGFVSDERADELFGLPAEERRRLILESLSHYLGEEALHPVVYYESDFGSEEWTRGAYAASYDLGGLHRYGAHQRTPVGPIRWACSDLAAEGYQHVDGALRQGRLAAAEVLGAGSLTGAER</sequence>
<comment type="catalytic activity">
    <reaction>
        <text>putrescine + O2 + H2O = 4-aminobutanal + H2O2 + NH4(+)</text>
        <dbReference type="Rhea" id="RHEA:18273"/>
        <dbReference type="ChEBI" id="CHEBI:15377"/>
        <dbReference type="ChEBI" id="CHEBI:15379"/>
        <dbReference type="ChEBI" id="CHEBI:16240"/>
        <dbReference type="ChEBI" id="CHEBI:28938"/>
        <dbReference type="ChEBI" id="CHEBI:58264"/>
        <dbReference type="ChEBI" id="CHEBI:326268"/>
        <dbReference type="EC" id="1.4.3.10"/>
    </reaction>
</comment>
<comment type="cofactor">
    <cofactor>
        <name>FAD</name>
        <dbReference type="ChEBI" id="CHEBI:57692"/>
    </cofactor>
</comment>
<comment type="similarity">
    <text evidence="2">Belongs to the flavin monoamine oxidase family.</text>
</comment>
<evidence type="ECO:0000255" key="1"/>
<evidence type="ECO:0000305" key="2"/>
<proteinExistence type="evidence at protein level"/>
<keyword id="KW-0903">Direct protein sequencing</keyword>
<keyword id="KW-0274">FAD</keyword>
<keyword id="KW-0285">Flavoprotein</keyword>
<keyword id="KW-0560">Oxidoreductase</keyword>
<organism>
    <name type="scientific">Kocuria rosea</name>
    <name type="common">Deinococcus erythromyxa</name>
    <name type="synonym">Micrococcus rubens</name>
    <dbReference type="NCBI Taxonomy" id="1275"/>
    <lineage>
        <taxon>Bacteria</taxon>
        <taxon>Bacillati</taxon>
        <taxon>Actinomycetota</taxon>
        <taxon>Actinomycetes</taxon>
        <taxon>Micrococcales</taxon>
        <taxon>Micrococcaceae</taxon>
        <taxon>Kocuria</taxon>
    </lineage>
</organism>
<protein>
    <recommendedName>
        <fullName>Putrescine oxidase</fullName>
        <ecNumber>1.4.3.10</ecNumber>
    </recommendedName>
</protein>
<accession>P40974</accession>
<reference key="1">
    <citation type="journal article" date="1993" name="J. Gen. Microbiol.">
        <title>Putrescine oxidase of Micrococcus rubens: primary structure and Escherichia coli.</title>
        <authorList>
            <person name="Ishizuka H."/>
            <person name="Horinouchi S."/>
            <person name="Beppu T."/>
        </authorList>
    </citation>
    <scope>NUCLEOTIDE SEQUENCE [GENOMIC DNA]</scope>
    <scope>PARTIAL PROTEIN SEQUENCE</scope>
    <source>
        <strain>ATCC 186 / DSM 20447 / JCM 11614 / NBRC 3768 / NCIMB 11696 / NCTC 7523</strain>
    </source>
</reference>
<gene>
    <name type="primary">puo</name>
</gene>
<name>PUO_KOCRO</name>
<dbReference type="EC" id="1.4.3.10"/>
<dbReference type="EMBL" id="D12511">
    <property type="protein sequence ID" value="BAA02074.1"/>
    <property type="molecule type" value="Genomic_DNA"/>
</dbReference>
<dbReference type="PIR" id="A47693">
    <property type="entry name" value="A47693"/>
</dbReference>
<dbReference type="RefSeq" id="WP_208746248.1">
    <property type="nucleotide sequence ID" value="NZ_CP035103.1"/>
</dbReference>
<dbReference type="SMR" id="P40974"/>
<dbReference type="BioCyc" id="MetaCyc:MONOMER-23"/>
<dbReference type="BRENDA" id="1.4.3.10">
    <property type="organism ID" value="3354"/>
</dbReference>
<dbReference type="GO" id="GO:0050232">
    <property type="term" value="F:putrescine oxidase activity"/>
    <property type="evidence" value="ECO:0007669"/>
    <property type="project" value="UniProtKB-EC"/>
</dbReference>
<dbReference type="Gene3D" id="3.50.50.60">
    <property type="entry name" value="FAD/NAD(P)-binding domain"/>
    <property type="match status" value="1"/>
</dbReference>
<dbReference type="InterPro" id="IPR002937">
    <property type="entry name" value="Amino_oxidase"/>
</dbReference>
<dbReference type="InterPro" id="IPR036188">
    <property type="entry name" value="FAD/NAD-bd_sf"/>
</dbReference>
<dbReference type="InterPro" id="IPR001613">
    <property type="entry name" value="Flavin_amine_oxidase"/>
</dbReference>
<dbReference type="InterPro" id="IPR050703">
    <property type="entry name" value="Flavin_MAO"/>
</dbReference>
<dbReference type="PANTHER" id="PTHR43563">
    <property type="entry name" value="AMINE OXIDASE"/>
    <property type="match status" value="1"/>
</dbReference>
<dbReference type="PANTHER" id="PTHR43563:SF1">
    <property type="entry name" value="AMINE OXIDASE [FLAVIN-CONTAINING] B"/>
    <property type="match status" value="1"/>
</dbReference>
<dbReference type="Pfam" id="PF01593">
    <property type="entry name" value="Amino_oxidase"/>
    <property type="match status" value="1"/>
</dbReference>
<dbReference type="PRINTS" id="PR00757">
    <property type="entry name" value="AMINEOXDASEF"/>
</dbReference>
<dbReference type="SUPFAM" id="SSF54373">
    <property type="entry name" value="FAD-linked reductases, C-terminal domain"/>
    <property type="match status" value="1"/>
</dbReference>
<dbReference type="SUPFAM" id="SSF51905">
    <property type="entry name" value="FAD/NAD(P)-binding domain"/>
    <property type="match status" value="1"/>
</dbReference>